<protein>
    <recommendedName>
        <fullName evidence="1">Cytochrome c-type biogenesis protein CcmE</fullName>
    </recommendedName>
    <alternativeName>
        <fullName evidence="1">Cytochrome c maturation protein E</fullName>
    </alternativeName>
    <alternativeName>
        <fullName evidence="1">Heme chaperone CcmE</fullName>
    </alternativeName>
</protein>
<keyword id="KW-0997">Cell inner membrane</keyword>
<keyword id="KW-1003">Cell membrane</keyword>
<keyword id="KW-0201">Cytochrome c-type biogenesis</keyword>
<keyword id="KW-0349">Heme</keyword>
<keyword id="KW-0408">Iron</keyword>
<keyword id="KW-0472">Membrane</keyword>
<keyword id="KW-0479">Metal-binding</keyword>
<keyword id="KW-1185">Reference proteome</keyword>
<keyword id="KW-0735">Signal-anchor</keyword>
<keyword id="KW-0812">Transmembrane</keyword>
<keyword id="KW-1133">Transmembrane helix</keyword>
<gene>
    <name evidence="1" type="primary">ccmE</name>
    <name evidence="1" type="synonym">cycJ</name>
    <name type="ordered locus">Rleg2_0921</name>
</gene>
<feature type="chain" id="PRO_1000189045" description="Cytochrome c-type biogenesis protein CcmE">
    <location>
        <begin position="1"/>
        <end position="171"/>
    </location>
</feature>
<feature type="topological domain" description="Cytoplasmic" evidence="1">
    <location>
        <begin position="1"/>
        <end position="7"/>
    </location>
</feature>
<feature type="transmembrane region" description="Helical; Signal-anchor for type II membrane protein" evidence="1">
    <location>
        <begin position="8"/>
        <end position="28"/>
    </location>
</feature>
<feature type="topological domain" description="Periplasmic" evidence="1">
    <location>
        <begin position="29"/>
        <end position="171"/>
    </location>
</feature>
<feature type="region of interest" description="Disordered" evidence="2">
    <location>
        <begin position="132"/>
        <end position="171"/>
    </location>
</feature>
<feature type="binding site" description="covalent" evidence="1">
    <location>
        <position position="124"/>
    </location>
    <ligand>
        <name>heme</name>
        <dbReference type="ChEBI" id="CHEBI:30413"/>
    </ligand>
</feature>
<feature type="binding site" description="axial binding residue" evidence="1">
    <location>
        <position position="128"/>
    </location>
    <ligand>
        <name>heme</name>
        <dbReference type="ChEBI" id="CHEBI:30413"/>
    </ligand>
    <ligandPart>
        <name>Fe</name>
        <dbReference type="ChEBI" id="CHEBI:18248"/>
    </ligandPart>
</feature>
<dbReference type="EMBL" id="CP001191">
    <property type="protein sequence ID" value="ACI54215.1"/>
    <property type="molecule type" value="Genomic_DNA"/>
</dbReference>
<dbReference type="RefSeq" id="WP_012557065.1">
    <property type="nucleotide sequence ID" value="NC_011369.1"/>
</dbReference>
<dbReference type="SMR" id="B5ZVF6"/>
<dbReference type="STRING" id="395492.Rleg2_0921"/>
<dbReference type="KEGG" id="rlt:Rleg2_0921"/>
<dbReference type="eggNOG" id="COG2332">
    <property type="taxonomic scope" value="Bacteria"/>
</dbReference>
<dbReference type="HOGENOM" id="CLU_079503_1_1_5"/>
<dbReference type="Proteomes" id="UP000008330">
    <property type="component" value="Chromosome"/>
</dbReference>
<dbReference type="GO" id="GO:0005886">
    <property type="term" value="C:plasma membrane"/>
    <property type="evidence" value="ECO:0007669"/>
    <property type="project" value="UniProtKB-SubCell"/>
</dbReference>
<dbReference type="GO" id="GO:0020037">
    <property type="term" value="F:heme binding"/>
    <property type="evidence" value="ECO:0007669"/>
    <property type="project" value="InterPro"/>
</dbReference>
<dbReference type="GO" id="GO:0046872">
    <property type="term" value="F:metal ion binding"/>
    <property type="evidence" value="ECO:0007669"/>
    <property type="project" value="UniProtKB-KW"/>
</dbReference>
<dbReference type="GO" id="GO:0017004">
    <property type="term" value="P:cytochrome complex assembly"/>
    <property type="evidence" value="ECO:0007669"/>
    <property type="project" value="UniProtKB-KW"/>
</dbReference>
<dbReference type="Gene3D" id="2.40.50.140">
    <property type="entry name" value="Nucleic acid-binding proteins"/>
    <property type="match status" value="1"/>
</dbReference>
<dbReference type="HAMAP" id="MF_01959">
    <property type="entry name" value="CcmE"/>
    <property type="match status" value="1"/>
</dbReference>
<dbReference type="InterPro" id="IPR004329">
    <property type="entry name" value="CcmE"/>
</dbReference>
<dbReference type="InterPro" id="IPR036127">
    <property type="entry name" value="CcmE-like_sf"/>
</dbReference>
<dbReference type="InterPro" id="IPR012340">
    <property type="entry name" value="NA-bd_OB-fold"/>
</dbReference>
<dbReference type="NCBIfam" id="NF009727">
    <property type="entry name" value="PRK13254.1-1"/>
    <property type="match status" value="1"/>
</dbReference>
<dbReference type="NCBIfam" id="NF009731">
    <property type="entry name" value="PRK13254.1-5"/>
    <property type="match status" value="1"/>
</dbReference>
<dbReference type="PANTHER" id="PTHR34128">
    <property type="entry name" value="CYTOCHROME C-TYPE BIOGENESIS PROTEIN CCME HOMOLOG, MITOCHONDRIAL"/>
    <property type="match status" value="1"/>
</dbReference>
<dbReference type="PANTHER" id="PTHR34128:SF2">
    <property type="entry name" value="CYTOCHROME C-TYPE BIOGENESIS PROTEIN CCME HOMOLOG, MITOCHONDRIAL"/>
    <property type="match status" value="1"/>
</dbReference>
<dbReference type="Pfam" id="PF03100">
    <property type="entry name" value="CcmE"/>
    <property type="match status" value="1"/>
</dbReference>
<dbReference type="SUPFAM" id="SSF82093">
    <property type="entry name" value="Heme chaperone CcmE"/>
    <property type="match status" value="1"/>
</dbReference>
<organism>
    <name type="scientific">Rhizobium leguminosarum bv. trifolii (strain WSM2304)</name>
    <dbReference type="NCBI Taxonomy" id="395492"/>
    <lineage>
        <taxon>Bacteria</taxon>
        <taxon>Pseudomonadati</taxon>
        <taxon>Pseudomonadota</taxon>
        <taxon>Alphaproteobacteria</taxon>
        <taxon>Hyphomicrobiales</taxon>
        <taxon>Rhizobiaceae</taxon>
        <taxon>Rhizobium/Agrobacterium group</taxon>
        <taxon>Rhizobium</taxon>
    </lineage>
</organism>
<reference key="1">
    <citation type="journal article" date="2010" name="Stand. Genomic Sci.">
        <title>Complete genome sequence of Rhizobium leguminosarum bv trifolii strain WSM2304, an effective microsymbiont of the South American clover Trifolium polymorphum.</title>
        <authorList>
            <person name="Reeve W."/>
            <person name="O'Hara G."/>
            <person name="Chain P."/>
            <person name="Ardley J."/>
            <person name="Brau L."/>
            <person name="Nandesena K."/>
            <person name="Tiwari R."/>
            <person name="Malfatti S."/>
            <person name="Kiss H."/>
            <person name="Lapidus A."/>
            <person name="Copeland A."/>
            <person name="Nolan M."/>
            <person name="Land M."/>
            <person name="Ivanova N."/>
            <person name="Mavromatis K."/>
            <person name="Markowitz V."/>
            <person name="Kyrpides N."/>
            <person name="Melino V."/>
            <person name="Denton M."/>
            <person name="Yates R."/>
            <person name="Howieson J."/>
        </authorList>
    </citation>
    <scope>NUCLEOTIDE SEQUENCE [LARGE SCALE GENOMIC DNA]</scope>
    <source>
        <strain>WSM2304</strain>
    </source>
</reference>
<accession>B5ZVF6</accession>
<proteinExistence type="inferred from homology"/>
<name>CCME_RHILW</name>
<evidence type="ECO:0000255" key="1">
    <source>
        <dbReference type="HAMAP-Rule" id="MF_01959"/>
    </source>
</evidence>
<evidence type="ECO:0000256" key="2">
    <source>
        <dbReference type="SAM" id="MobiDB-lite"/>
    </source>
</evidence>
<sequence>MNRKQKRLAVIAGGMGFIAAAVLLVMFAFSQSVAYFYMPADLAKTPVAPETRIRLGGLVGEGSVVRGAGSTVEFSVTDGSANAVKVKYTGILPDLFREGQGVVTEGMFAPGTNVFTADTVLAKHDETYMPKDVADRLKQQGLWKEGQGGQESPGKEGQGQENPGEEAKATQ</sequence>
<comment type="function">
    <text evidence="1">Heme chaperone required for the biogenesis of c-type cytochromes. Transiently binds heme delivered by CcmC and transfers the heme to apo-cytochromes in a process facilitated by CcmF and CcmH.</text>
</comment>
<comment type="subcellular location">
    <subcellularLocation>
        <location evidence="1">Cell inner membrane</location>
        <topology evidence="1">Single-pass type II membrane protein</topology>
        <orientation evidence="1">Periplasmic side</orientation>
    </subcellularLocation>
</comment>
<comment type="similarity">
    <text evidence="1">Belongs to the CcmE/CycJ family.</text>
</comment>